<organism>
    <name type="scientific">Shigella dysenteriae serotype 1 (strain Sd197)</name>
    <dbReference type="NCBI Taxonomy" id="300267"/>
    <lineage>
        <taxon>Bacteria</taxon>
        <taxon>Pseudomonadati</taxon>
        <taxon>Pseudomonadota</taxon>
        <taxon>Gammaproteobacteria</taxon>
        <taxon>Enterobacterales</taxon>
        <taxon>Enterobacteriaceae</taxon>
        <taxon>Shigella</taxon>
    </lineage>
</organism>
<proteinExistence type="inferred from homology"/>
<name>YOBH_SHIDS</name>
<gene>
    <name type="primary">yobH</name>
    <name type="ordered locus">SDY_1974</name>
</gene>
<feature type="signal peptide" evidence="1">
    <location>
        <begin position="1"/>
        <end position="33"/>
    </location>
</feature>
<feature type="chain" id="PRO_0000259712" description="Uncharacterized protein YobH">
    <location>
        <begin position="34"/>
        <end position="79"/>
    </location>
</feature>
<reference key="1">
    <citation type="journal article" date="2005" name="Nucleic Acids Res.">
        <title>Genome dynamics and diversity of Shigella species, the etiologic agents of bacillary dysentery.</title>
        <authorList>
            <person name="Yang F."/>
            <person name="Yang J."/>
            <person name="Zhang X."/>
            <person name="Chen L."/>
            <person name="Jiang Y."/>
            <person name="Yan Y."/>
            <person name="Tang X."/>
            <person name="Wang J."/>
            <person name="Xiong Z."/>
            <person name="Dong J."/>
            <person name="Xue Y."/>
            <person name="Zhu Y."/>
            <person name="Xu X."/>
            <person name="Sun L."/>
            <person name="Chen S."/>
            <person name="Nie H."/>
            <person name="Peng J."/>
            <person name="Xu J."/>
            <person name="Wang Y."/>
            <person name="Yuan Z."/>
            <person name="Wen Y."/>
            <person name="Yao Z."/>
            <person name="Shen Y."/>
            <person name="Qiang B."/>
            <person name="Hou Y."/>
            <person name="Yu J."/>
            <person name="Jin Q."/>
        </authorList>
    </citation>
    <scope>NUCLEOTIDE SEQUENCE [LARGE SCALE GENOMIC DNA]</scope>
    <source>
        <strain>Sd197</strain>
    </source>
</reference>
<sequence>MRFIIRTVMLIALVWIGLLLSGYGVLIGSKENAAGLGLQCTYLTARGTSTVQYLHTKSGFLGITDCPLLRKSNIVVDNG</sequence>
<protein>
    <recommendedName>
        <fullName>Uncharacterized protein YobH</fullName>
    </recommendedName>
</protein>
<evidence type="ECO:0000255" key="1"/>
<dbReference type="EMBL" id="CP000034">
    <property type="protein sequence ID" value="ABB62074.1"/>
    <property type="molecule type" value="Genomic_DNA"/>
</dbReference>
<dbReference type="RefSeq" id="WP_001211011.1">
    <property type="nucleotide sequence ID" value="NC_007606.1"/>
</dbReference>
<dbReference type="RefSeq" id="YP_403565.1">
    <property type="nucleotide sequence ID" value="NC_007606.1"/>
</dbReference>
<dbReference type="STRING" id="300267.SDY_1974"/>
<dbReference type="EnsemblBacteria" id="ABB62074">
    <property type="protein sequence ID" value="ABB62074"/>
    <property type="gene ID" value="SDY_1974"/>
</dbReference>
<dbReference type="KEGG" id="sdy:SDY_1974"/>
<dbReference type="PATRIC" id="fig|300267.13.peg.2383"/>
<dbReference type="HOGENOM" id="CLU_179882_0_0_6"/>
<dbReference type="Proteomes" id="UP000002716">
    <property type="component" value="Chromosome"/>
</dbReference>
<dbReference type="InterPro" id="IPR025611">
    <property type="entry name" value="YobH"/>
</dbReference>
<dbReference type="Pfam" id="PF13996">
    <property type="entry name" value="YobH"/>
    <property type="match status" value="1"/>
</dbReference>
<keyword id="KW-1185">Reference proteome</keyword>
<keyword id="KW-0732">Signal</keyword>
<accession>Q32F31</accession>